<sequence length="145" mass="15925">MIALIQRVTRASVTVEDEVTGKIGPGLLVLLGVEKEDDEQKANRLCERVLGYRIFSDADGKMNLNVQQAGGSVLVVSQFTLAADTERGMRPSFSGGAAPDRAQALYEYFVERCRQQAINTQTGRFAADMQVELVNDGPVTFWLQV</sequence>
<evidence type="ECO:0000255" key="1">
    <source>
        <dbReference type="HAMAP-Rule" id="MF_00518"/>
    </source>
</evidence>
<comment type="function">
    <text evidence="1">An aminoacyl-tRNA editing enzyme that deacylates mischarged D-aminoacyl-tRNAs. Also deacylates mischarged glycyl-tRNA(Ala), protecting cells against glycine mischarging by AlaRS. Acts via tRNA-based rather than protein-based catalysis; rejects L-amino acids rather than detecting D-amino acids in the active site. By recycling D-aminoacyl-tRNA to D-amino acids and free tRNA molecules, this enzyme counteracts the toxicity associated with the formation of D-aminoacyl-tRNA entities in vivo and helps enforce protein L-homochirality.</text>
</comment>
<comment type="catalytic activity">
    <reaction evidence="1">
        <text>glycyl-tRNA(Ala) + H2O = tRNA(Ala) + glycine + H(+)</text>
        <dbReference type="Rhea" id="RHEA:53744"/>
        <dbReference type="Rhea" id="RHEA-COMP:9657"/>
        <dbReference type="Rhea" id="RHEA-COMP:13640"/>
        <dbReference type="ChEBI" id="CHEBI:15377"/>
        <dbReference type="ChEBI" id="CHEBI:15378"/>
        <dbReference type="ChEBI" id="CHEBI:57305"/>
        <dbReference type="ChEBI" id="CHEBI:78442"/>
        <dbReference type="ChEBI" id="CHEBI:78522"/>
        <dbReference type="EC" id="3.1.1.96"/>
    </reaction>
</comment>
<comment type="catalytic activity">
    <reaction evidence="1">
        <text>a D-aminoacyl-tRNA + H2O = a tRNA + a D-alpha-amino acid + H(+)</text>
        <dbReference type="Rhea" id="RHEA:13953"/>
        <dbReference type="Rhea" id="RHEA-COMP:10123"/>
        <dbReference type="Rhea" id="RHEA-COMP:10124"/>
        <dbReference type="ChEBI" id="CHEBI:15377"/>
        <dbReference type="ChEBI" id="CHEBI:15378"/>
        <dbReference type="ChEBI" id="CHEBI:59871"/>
        <dbReference type="ChEBI" id="CHEBI:78442"/>
        <dbReference type="ChEBI" id="CHEBI:79333"/>
        <dbReference type="EC" id="3.1.1.96"/>
    </reaction>
</comment>
<comment type="subunit">
    <text evidence="1">Homodimer.</text>
</comment>
<comment type="subcellular location">
    <subcellularLocation>
        <location evidence="1">Cytoplasm</location>
    </subcellularLocation>
</comment>
<comment type="domain">
    <text evidence="1">A Gly-cisPro motif from one monomer fits into the active site of the other monomer to allow specific chiral rejection of L-amino acids.</text>
</comment>
<comment type="similarity">
    <text evidence="1">Belongs to the DTD family.</text>
</comment>
<feature type="chain" id="PRO_0000164581" description="D-aminoacyl-tRNA deacylase">
    <location>
        <begin position="1"/>
        <end position="145"/>
    </location>
</feature>
<feature type="short sequence motif" description="Gly-cisPro motif, important for rejection of L-amino acids" evidence="1">
    <location>
        <begin position="137"/>
        <end position="138"/>
    </location>
</feature>
<organism>
    <name type="scientific">Salmonella typhimurium (strain LT2 / SGSC1412 / ATCC 700720)</name>
    <dbReference type="NCBI Taxonomy" id="99287"/>
    <lineage>
        <taxon>Bacteria</taxon>
        <taxon>Pseudomonadati</taxon>
        <taxon>Pseudomonadota</taxon>
        <taxon>Gammaproteobacteria</taxon>
        <taxon>Enterobacterales</taxon>
        <taxon>Enterobacteriaceae</taxon>
        <taxon>Salmonella</taxon>
    </lineage>
</organism>
<reference key="1">
    <citation type="journal article" date="2001" name="Nature">
        <title>Complete genome sequence of Salmonella enterica serovar Typhimurium LT2.</title>
        <authorList>
            <person name="McClelland M."/>
            <person name="Sanderson K.E."/>
            <person name="Spieth J."/>
            <person name="Clifton S.W."/>
            <person name="Latreille P."/>
            <person name="Courtney L."/>
            <person name="Porwollik S."/>
            <person name="Ali J."/>
            <person name="Dante M."/>
            <person name="Du F."/>
            <person name="Hou S."/>
            <person name="Layman D."/>
            <person name="Leonard S."/>
            <person name="Nguyen C."/>
            <person name="Scott K."/>
            <person name="Holmes A."/>
            <person name="Grewal N."/>
            <person name="Mulvaney E."/>
            <person name="Ryan E."/>
            <person name="Sun H."/>
            <person name="Florea L."/>
            <person name="Miller W."/>
            <person name="Stoneking T."/>
            <person name="Nhan M."/>
            <person name="Waterston R."/>
            <person name="Wilson R.K."/>
        </authorList>
    </citation>
    <scope>NUCLEOTIDE SEQUENCE [LARGE SCALE GENOMIC DNA]</scope>
    <source>
        <strain>LT2 / SGSC1412 / ATCC 700720</strain>
    </source>
</reference>
<protein>
    <recommendedName>
        <fullName evidence="1">D-aminoacyl-tRNA deacylase</fullName>
        <shortName evidence="1">DTD</shortName>
        <ecNumber evidence="1">3.1.1.96</ecNumber>
    </recommendedName>
    <alternativeName>
        <fullName evidence="1">Gly-tRNA(Ala) deacylase</fullName>
    </alternativeName>
</protein>
<keyword id="KW-0963">Cytoplasm</keyword>
<keyword id="KW-0378">Hydrolase</keyword>
<keyword id="KW-1185">Reference proteome</keyword>
<keyword id="KW-0694">RNA-binding</keyword>
<keyword id="KW-0820">tRNA-binding</keyword>
<proteinExistence type="inferred from homology"/>
<gene>
    <name evidence="1" type="primary">dtd</name>
    <name type="ordered locus">STM4028</name>
</gene>
<name>DTD_SALTY</name>
<accession>P58533</accession>
<dbReference type="EC" id="3.1.1.96" evidence="1"/>
<dbReference type="EMBL" id="AE006468">
    <property type="protein sequence ID" value="AAL22867.1"/>
    <property type="molecule type" value="Genomic_DNA"/>
</dbReference>
<dbReference type="RefSeq" id="WP_000560974.1">
    <property type="nucleotide sequence ID" value="NC_003197.2"/>
</dbReference>
<dbReference type="SMR" id="P58533"/>
<dbReference type="STRING" id="99287.STM4028"/>
<dbReference type="PaxDb" id="99287-STM4028"/>
<dbReference type="KEGG" id="stm:STM4028"/>
<dbReference type="PATRIC" id="fig|99287.12.peg.4243"/>
<dbReference type="HOGENOM" id="CLU_076901_1_0_6"/>
<dbReference type="OMA" id="VFGADMK"/>
<dbReference type="PhylomeDB" id="P58533"/>
<dbReference type="BioCyc" id="SENT99287:STM4028-MONOMER"/>
<dbReference type="Proteomes" id="UP000001014">
    <property type="component" value="Chromosome"/>
</dbReference>
<dbReference type="GO" id="GO:0005737">
    <property type="term" value="C:cytoplasm"/>
    <property type="evidence" value="ECO:0000318"/>
    <property type="project" value="GO_Central"/>
</dbReference>
<dbReference type="GO" id="GO:0051500">
    <property type="term" value="F:D-tyrosyl-tRNA(Tyr) deacylase activity"/>
    <property type="evidence" value="ECO:0000318"/>
    <property type="project" value="GO_Central"/>
</dbReference>
<dbReference type="GO" id="GO:0106026">
    <property type="term" value="F:Gly-tRNA(Ala) deacylase activity"/>
    <property type="evidence" value="ECO:0007669"/>
    <property type="project" value="UniProtKB-UniRule"/>
</dbReference>
<dbReference type="GO" id="GO:0043908">
    <property type="term" value="F:Ser(Gly)-tRNA(Ala) hydrolase activity"/>
    <property type="evidence" value="ECO:0007669"/>
    <property type="project" value="UniProtKB-UniRule"/>
</dbReference>
<dbReference type="GO" id="GO:0000049">
    <property type="term" value="F:tRNA binding"/>
    <property type="evidence" value="ECO:0007669"/>
    <property type="project" value="UniProtKB-UniRule"/>
</dbReference>
<dbReference type="GO" id="GO:0019478">
    <property type="term" value="P:D-amino acid catabolic process"/>
    <property type="evidence" value="ECO:0007669"/>
    <property type="project" value="UniProtKB-UniRule"/>
</dbReference>
<dbReference type="GO" id="GO:0006399">
    <property type="term" value="P:tRNA metabolic process"/>
    <property type="evidence" value="ECO:0000318"/>
    <property type="project" value="GO_Central"/>
</dbReference>
<dbReference type="CDD" id="cd00563">
    <property type="entry name" value="Dtyr_deacylase"/>
    <property type="match status" value="1"/>
</dbReference>
<dbReference type="FunFam" id="3.50.80.10:FF:000001">
    <property type="entry name" value="D-aminoacyl-tRNA deacylase"/>
    <property type="match status" value="1"/>
</dbReference>
<dbReference type="Gene3D" id="3.50.80.10">
    <property type="entry name" value="D-tyrosyl-tRNA(Tyr) deacylase"/>
    <property type="match status" value="1"/>
</dbReference>
<dbReference type="HAMAP" id="MF_00518">
    <property type="entry name" value="Deacylase_Dtd"/>
    <property type="match status" value="1"/>
</dbReference>
<dbReference type="InterPro" id="IPR003732">
    <property type="entry name" value="Daa-tRNA_deacyls_DTD"/>
</dbReference>
<dbReference type="InterPro" id="IPR023509">
    <property type="entry name" value="DTD-like_sf"/>
</dbReference>
<dbReference type="NCBIfam" id="TIGR00256">
    <property type="entry name" value="D-aminoacyl-tRNA deacylase"/>
    <property type="match status" value="1"/>
</dbReference>
<dbReference type="PANTHER" id="PTHR10472:SF5">
    <property type="entry name" value="D-AMINOACYL-TRNA DEACYLASE 1"/>
    <property type="match status" value="1"/>
</dbReference>
<dbReference type="PANTHER" id="PTHR10472">
    <property type="entry name" value="D-TYROSYL-TRNA TYR DEACYLASE"/>
    <property type="match status" value="1"/>
</dbReference>
<dbReference type="Pfam" id="PF02580">
    <property type="entry name" value="Tyr_Deacylase"/>
    <property type="match status" value="1"/>
</dbReference>
<dbReference type="SUPFAM" id="SSF69500">
    <property type="entry name" value="DTD-like"/>
    <property type="match status" value="1"/>
</dbReference>